<organism>
    <name type="scientific">Beijerinckia indica subsp. indica (strain ATCC 9039 / DSM 1715 / NCIMB 8712)</name>
    <dbReference type="NCBI Taxonomy" id="395963"/>
    <lineage>
        <taxon>Bacteria</taxon>
        <taxon>Pseudomonadati</taxon>
        <taxon>Pseudomonadota</taxon>
        <taxon>Alphaproteobacteria</taxon>
        <taxon>Hyphomicrobiales</taxon>
        <taxon>Beijerinckiaceae</taxon>
        <taxon>Beijerinckia</taxon>
    </lineage>
</organism>
<name>PROA_BEII9</name>
<keyword id="KW-0028">Amino-acid biosynthesis</keyword>
<keyword id="KW-0963">Cytoplasm</keyword>
<keyword id="KW-0521">NADP</keyword>
<keyword id="KW-0560">Oxidoreductase</keyword>
<keyword id="KW-0641">Proline biosynthesis</keyword>
<keyword id="KW-1185">Reference proteome</keyword>
<comment type="function">
    <text evidence="1">Catalyzes the NADPH-dependent reduction of L-glutamate 5-phosphate into L-glutamate 5-semialdehyde and phosphate. The product spontaneously undergoes cyclization to form 1-pyrroline-5-carboxylate.</text>
</comment>
<comment type="catalytic activity">
    <reaction evidence="1">
        <text>L-glutamate 5-semialdehyde + phosphate + NADP(+) = L-glutamyl 5-phosphate + NADPH + H(+)</text>
        <dbReference type="Rhea" id="RHEA:19541"/>
        <dbReference type="ChEBI" id="CHEBI:15378"/>
        <dbReference type="ChEBI" id="CHEBI:43474"/>
        <dbReference type="ChEBI" id="CHEBI:57783"/>
        <dbReference type="ChEBI" id="CHEBI:58066"/>
        <dbReference type="ChEBI" id="CHEBI:58274"/>
        <dbReference type="ChEBI" id="CHEBI:58349"/>
        <dbReference type="EC" id="1.2.1.41"/>
    </reaction>
</comment>
<comment type="pathway">
    <text evidence="1">Amino-acid biosynthesis; L-proline biosynthesis; L-glutamate 5-semialdehyde from L-glutamate: step 2/2.</text>
</comment>
<comment type="subcellular location">
    <subcellularLocation>
        <location evidence="1">Cytoplasm</location>
    </subcellularLocation>
</comment>
<comment type="similarity">
    <text evidence="1">Belongs to the gamma-glutamyl phosphate reductase family.</text>
</comment>
<dbReference type="EC" id="1.2.1.41" evidence="1"/>
<dbReference type="EMBL" id="CP001016">
    <property type="protein sequence ID" value="ACB94066.1"/>
    <property type="molecule type" value="Genomic_DNA"/>
</dbReference>
<dbReference type="RefSeq" id="WP_012383424.1">
    <property type="nucleotide sequence ID" value="NC_010581.1"/>
</dbReference>
<dbReference type="SMR" id="B2IE42"/>
<dbReference type="STRING" id="395963.Bind_0413"/>
<dbReference type="KEGG" id="bid:Bind_0413"/>
<dbReference type="eggNOG" id="COG0014">
    <property type="taxonomic scope" value="Bacteria"/>
</dbReference>
<dbReference type="HOGENOM" id="CLU_030231_0_0_5"/>
<dbReference type="OrthoDB" id="9809970at2"/>
<dbReference type="UniPathway" id="UPA00098">
    <property type="reaction ID" value="UER00360"/>
</dbReference>
<dbReference type="Proteomes" id="UP000001695">
    <property type="component" value="Chromosome"/>
</dbReference>
<dbReference type="GO" id="GO:0005737">
    <property type="term" value="C:cytoplasm"/>
    <property type="evidence" value="ECO:0007669"/>
    <property type="project" value="UniProtKB-SubCell"/>
</dbReference>
<dbReference type="GO" id="GO:0004350">
    <property type="term" value="F:glutamate-5-semialdehyde dehydrogenase activity"/>
    <property type="evidence" value="ECO:0007669"/>
    <property type="project" value="UniProtKB-UniRule"/>
</dbReference>
<dbReference type="GO" id="GO:0050661">
    <property type="term" value="F:NADP binding"/>
    <property type="evidence" value="ECO:0007669"/>
    <property type="project" value="InterPro"/>
</dbReference>
<dbReference type="GO" id="GO:0055129">
    <property type="term" value="P:L-proline biosynthetic process"/>
    <property type="evidence" value="ECO:0007669"/>
    <property type="project" value="UniProtKB-UniRule"/>
</dbReference>
<dbReference type="CDD" id="cd07079">
    <property type="entry name" value="ALDH_F18-19_ProA-GPR"/>
    <property type="match status" value="1"/>
</dbReference>
<dbReference type="FunFam" id="3.40.309.10:FF:000006">
    <property type="entry name" value="Gamma-glutamyl phosphate reductase"/>
    <property type="match status" value="1"/>
</dbReference>
<dbReference type="Gene3D" id="3.40.605.10">
    <property type="entry name" value="Aldehyde Dehydrogenase, Chain A, domain 1"/>
    <property type="match status" value="1"/>
</dbReference>
<dbReference type="Gene3D" id="3.40.309.10">
    <property type="entry name" value="Aldehyde Dehydrogenase, Chain A, domain 2"/>
    <property type="match status" value="1"/>
</dbReference>
<dbReference type="HAMAP" id="MF_00412">
    <property type="entry name" value="ProA"/>
    <property type="match status" value="1"/>
</dbReference>
<dbReference type="InterPro" id="IPR016161">
    <property type="entry name" value="Ald_DH/histidinol_DH"/>
</dbReference>
<dbReference type="InterPro" id="IPR016163">
    <property type="entry name" value="Ald_DH_C"/>
</dbReference>
<dbReference type="InterPro" id="IPR016162">
    <property type="entry name" value="Ald_DH_N"/>
</dbReference>
<dbReference type="InterPro" id="IPR015590">
    <property type="entry name" value="Aldehyde_DH_dom"/>
</dbReference>
<dbReference type="InterPro" id="IPR012134">
    <property type="entry name" value="Glu-5-SA_DH"/>
</dbReference>
<dbReference type="InterPro" id="IPR000965">
    <property type="entry name" value="GPR_dom"/>
</dbReference>
<dbReference type="NCBIfam" id="NF001221">
    <property type="entry name" value="PRK00197.1"/>
    <property type="match status" value="1"/>
</dbReference>
<dbReference type="NCBIfam" id="TIGR00407">
    <property type="entry name" value="proA"/>
    <property type="match status" value="1"/>
</dbReference>
<dbReference type="PANTHER" id="PTHR11063:SF8">
    <property type="entry name" value="DELTA-1-PYRROLINE-5-CARBOXYLATE SYNTHASE"/>
    <property type="match status" value="1"/>
</dbReference>
<dbReference type="PANTHER" id="PTHR11063">
    <property type="entry name" value="GLUTAMATE SEMIALDEHYDE DEHYDROGENASE"/>
    <property type="match status" value="1"/>
</dbReference>
<dbReference type="Pfam" id="PF00171">
    <property type="entry name" value="Aldedh"/>
    <property type="match status" value="1"/>
</dbReference>
<dbReference type="PIRSF" id="PIRSF000151">
    <property type="entry name" value="GPR"/>
    <property type="match status" value="1"/>
</dbReference>
<dbReference type="SUPFAM" id="SSF53720">
    <property type="entry name" value="ALDH-like"/>
    <property type="match status" value="1"/>
</dbReference>
<proteinExistence type="inferred from homology"/>
<reference key="1">
    <citation type="journal article" date="2010" name="J. Bacteriol.">
        <title>Complete genome sequence of Beijerinckia indica subsp. indica.</title>
        <authorList>
            <person name="Tamas I."/>
            <person name="Dedysh S.N."/>
            <person name="Liesack W."/>
            <person name="Stott M.B."/>
            <person name="Alam M."/>
            <person name="Murrell J.C."/>
            <person name="Dunfield P.F."/>
        </authorList>
    </citation>
    <scope>NUCLEOTIDE SEQUENCE [LARGE SCALE GENOMIC DNA]</scope>
    <source>
        <strain>ATCC 9039 / DSM 1715 / NCIMB 8712</strain>
    </source>
</reference>
<feature type="chain" id="PRO_1000193573" description="Gamma-glutamyl phosphate reductase">
    <location>
        <begin position="1"/>
        <end position="431"/>
    </location>
</feature>
<protein>
    <recommendedName>
        <fullName evidence="1">Gamma-glutamyl phosphate reductase</fullName>
        <shortName evidence="1">GPR</shortName>
        <ecNumber evidence="1">1.2.1.41</ecNumber>
    </recommendedName>
    <alternativeName>
        <fullName evidence="1">Glutamate-5-semialdehyde dehydrogenase</fullName>
    </alternativeName>
    <alternativeName>
        <fullName evidence="1">Glutamyl-gamma-semialdehyde dehydrogenase</fullName>
        <shortName evidence="1">GSA dehydrogenase</shortName>
    </alternativeName>
</protein>
<sequence>MDALQLVSNRSETDVPALMHALGQQARASAHALSLASTEAKNLALRVAAEQLRKRTQDLLLANARDLEGAKAQDANAAFLDRLTLDDKRIEAIARGLDEIAALPDPVGRMLARYERPNGLVIERVATPLGVIGIIYESRPAVTADAGALCLKAGNAAILRGGSESFFSATIIHACLTEGLRAAGLPEAAVSLVPTRDRAAVGEMLKGLDGTIDVIVPRGGKSLVARVQAEARVPVFAHLEGVNHIFVHRAADLEKAAIIIRNAKLRRPGVCGAAEILLVDEACMATHLAPLTRMLLDAGCAIRGDAATQTIDPRVTAAMESDWRTEYSDAIIAVRVIDGLNKAIAHIETHGSHHTDCIITEDQEAADRFLAEVDSAIVMHNASTQFADGGEFGFGAEIGIATGRLHARGPVGLEQLTSFKYRVHGNGQIRP</sequence>
<gene>
    <name evidence="1" type="primary">proA</name>
    <name type="ordered locus">Bind_0413</name>
</gene>
<accession>B2IE42</accession>
<evidence type="ECO:0000255" key="1">
    <source>
        <dbReference type="HAMAP-Rule" id="MF_00412"/>
    </source>
</evidence>